<comment type="function">
    <text evidence="1">Nucleotidase with a broad substrate specificity as it can dephosphorylate various ribo- and deoxyribonucleoside 5'-monophosphates and ribonucleoside 3'-monophosphates with highest affinity to 3'-AMP. Also hydrolyzes polyphosphate (exopolyphosphatase activity) with the preference for short-chain-length substrates (P20-25). Might be involved in the regulation of dNTP and NTP pools, and in the turnover of 3'-mononucleotides produced by numerous intracellular RNases (T1, T2, and F) during the degradation of various RNAs.</text>
</comment>
<comment type="catalytic activity">
    <reaction evidence="1">
        <text>a ribonucleoside 5'-phosphate + H2O = a ribonucleoside + phosphate</text>
        <dbReference type="Rhea" id="RHEA:12484"/>
        <dbReference type="ChEBI" id="CHEBI:15377"/>
        <dbReference type="ChEBI" id="CHEBI:18254"/>
        <dbReference type="ChEBI" id="CHEBI:43474"/>
        <dbReference type="ChEBI" id="CHEBI:58043"/>
        <dbReference type="EC" id="3.1.3.5"/>
    </reaction>
</comment>
<comment type="catalytic activity">
    <reaction evidence="1">
        <text>a ribonucleoside 3'-phosphate + H2O = a ribonucleoside + phosphate</text>
        <dbReference type="Rhea" id="RHEA:10144"/>
        <dbReference type="ChEBI" id="CHEBI:13197"/>
        <dbReference type="ChEBI" id="CHEBI:15377"/>
        <dbReference type="ChEBI" id="CHEBI:18254"/>
        <dbReference type="ChEBI" id="CHEBI:43474"/>
        <dbReference type="EC" id="3.1.3.6"/>
    </reaction>
</comment>
<comment type="catalytic activity">
    <reaction evidence="1">
        <text>[phosphate](n) + H2O = [phosphate](n-1) + phosphate + H(+)</text>
        <dbReference type="Rhea" id="RHEA:21528"/>
        <dbReference type="Rhea" id="RHEA-COMP:9859"/>
        <dbReference type="Rhea" id="RHEA-COMP:14279"/>
        <dbReference type="ChEBI" id="CHEBI:15377"/>
        <dbReference type="ChEBI" id="CHEBI:15378"/>
        <dbReference type="ChEBI" id="CHEBI:16838"/>
        <dbReference type="ChEBI" id="CHEBI:43474"/>
        <dbReference type="EC" id="3.6.1.11"/>
    </reaction>
</comment>
<comment type="cofactor">
    <cofactor evidence="1">
        <name>a divalent metal cation</name>
        <dbReference type="ChEBI" id="CHEBI:60240"/>
    </cofactor>
    <text evidence="1">Binds 1 divalent metal cation per subunit.</text>
</comment>
<comment type="subcellular location">
    <subcellularLocation>
        <location evidence="1">Cytoplasm</location>
    </subcellularLocation>
</comment>
<comment type="similarity">
    <text evidence="1">Belongs to the SurE nucleotidase family.</text>
</comment>
<accession>B4F224</accession>
<protein>
    <recommendedName>
        <fullName evidence="1">5'/3'-nucleotidase SurE</fullName>
        <ecNumber evidence="1">3.1.3.5</ecNumber>
        <ecNumber evidence="1">3.1.3.6</ecNumber>
    </recommendedName>
    <alternativeName>
        <fullName evidence="1">Exopolyphosphatase</fullName>
        <ecNumber evidence="1">3.6.1.11</ecNumber>
    </alternativeName>
    <alternativeName>
        <fullName evidence="1">Nucleoside monophosphate phosphohydrolase</fullName>
    </alternativeName>
</protein>
<sequence>MLKILVSNDDGVMAKGIQTLAKALRQRYDVQIVAPDRNRSAASNSLTIDRPLRKQRHENGDIAIVEGTPTDCVYLGVNHLVRPRPDIVVSGINHGPNLGDDVLYSGTVAAATEGRFLGLPAIAVSLDGETHFDTAAQVTCDVLAMLQRVPLRAGNILNINVPDIPLAEIKGFRITRCGSRHASQHVYTQTDPKGNTLYWIGPPGEKNDVGPDTDFAAVDAGYVSITPLHVDSTAYKALELLKDWLNKAEVEKTC</sequence>
<gene>
    <name evidence="1" type="primary">surE</name>
    <name type="ordered locus">PMI2239</name>
</gene>
<feature type="chain" id="PRO_1000092026" description="5'/3'-nucleotidase SurE">
    <location>
        <begin position="1"/>
        <end position="254"/>
    </location>
</feature>
<feature type="binding site" evidence="1">
    <location>
        <position position="9"/>
    </location>
    <ligand>
        <name>a divalent metal cation</name>
        <dbReference type="ChEBI" id="CHEBI:60240"/>
    </ligand>
</feature>
<feature type="binding site" evidence="1">
    <location>
        <position position="10"/>
    </location>
    <ligand>
        <name>a divalent metal cation</name>
        <dbReference type="ChEBI" id="CHEBI:60240"/>
    </ligand>
</feature>
<feature type="binding site" evidence="1">
    <location>
        <position position="40"/>
    </location>
    <ligand>
        <name>a divalent metal cation</name>
        <dbReference type="ChEBI" id="CHEBI:60240"/>
    </ligand>
</feature>
<feature type="binding site" evidence="1">
    <location>
        <position position="93"/>
    </location>
    <ligand>
        <name>a divalent metal cation</name>
        <dbReference type="ChEBI" id="CHEBI:60240"/>
    </ligand>
</feature>
<dbReference type="EC" id="3.1.3.5" evidence="1"/>
<dbReference type="EC" id="3.1.3.6" evidence="1"/>
<dbReference type="EC" id="3.6.1.11" evidence="1"/>
<dbReference type="EMBL" id="AM942759">
    <property type="protein sequence ID" value="CAR44447.1"/>
    <property type="molecule type" value="Genomic_DNA"/>
</dbReference>
<dbReference type="RefSeq" id="WP_004244347.1">
    <property type="nucleotide sequence ID" value="NC_010554.1"/>
</dbReference>
<dbReference type="SMR" id="B4F224"/>
<dbReference type="EnsemblBacteria" id="CAR44447">
    <property type="protein sequence ID" value="CAR44447"/>
    <property type="gene ID" value="PMI2239"/>
</dbReference>
<dbReference type="GeneID" id="6801936"/>
<dbReference type="KEGG" id="pmr:PMI2239"/>
<dbReference type="eggNOG" id="COG0496">
    <property type="taxonomic scope" value="Bacteria"/>
</dbReference>
<dbReference type="HOGENOM" id="CLU_045192_1_2_6"/>
<dbReference type="Proteomes" id="UP000008319">
    <property type="component" value="Chromosome"/>
</dbReference>
<dbReference type="GO" id="GO:0005737">
    <property type="term" value="C:cytoplasm"/>
    <property type="evidence" value="ECO:0007669"/>
    <property type="project" value="UniProtKB-SubCell"/>
</dbReference>
<dbReference type="GO" id="GO:0008254">
    <property type="term" value="F:3'-nucleotidase activity"/>
    <property type="evidence" value="ECO:0007669"/>
    <property type="project" value="UniProtKB-UniRule"/>
</dbReference>
<dbReference type="GO" id="GO:0008253">
    <property type="term" value="F:5'-nucleotidase activity"/>
    <property type="evidence" value="ECO:0007669"/>
    <property type="project" value="UniProtKB-UniRule"/>
</dbReference>
<dbReference type="GO" id="GO:0004309">
    <property type="term" value="F:exopolyphosphatase activity"/>
    <property type="evidence" value="ECO:0007669"/>
    <property type="project" value="UniProtKB-UniRule"/>
</dbReference>
<dbReference type="GO" id="GO:0046872">
    <property type="term" value="F:metal ion binding"/>
    <property type="evidence" value="ECO:0007669"/>
    <property type="project" value="UniProtKB-UniRule"/>
</dbReference>
<dbReference type="GO" id="GO:0000166">
    <property type="term" value="F:nucleotide binding"/>
    <property type="evidence" value="ECO:0007669"/>
    <property type="project" value="UniProtKB-KW"/>
</dbReference>
<dbReference type="FunFam" id="3.40.1210.10:FF:000001">
    <property type="entry name" value="5'/3'-nucleotidase SurE"/>
    <property type="match status" value="1"/>
</dbReference>
<dbReference type="Gene3D" id="3.40.1210.10">
    <property type="entry name" value="Survival protein SurE-like phosphatase/nucleotidase"/>
    <property type="match status" value="1"/>
</dbReference>
<dbReference type="HAMAP" id="MF_00060">
    <property type="entry name" value="SurE"/>
    <property type="match status" value="1"/>
</dbReference>
<dbReference type="InterPro" id="IPR030048">
    <property type="entry name" value="SurE"/>
</dbReference>
<dbReference type="InterPro" id="IPR002828">
    <property type="entry name" value="SurE-like_Pase/nucleotidase"/>
</dbReference>
<dbReference type="InterPro" id="IPR036523">
    <property type="entry name" value="SurE-like_sf"/>
</dbReference>
<dbReference type="NCBIfam" id="NF001488">
    <property type="entry name" value="PRK00346.1-1"/>
    <property type="match status" value="1"/>
</dbReference>
<dbReference type="NCBIfam" id="NF001489">
    <property type="entry name" value="PRK00346.1-3"/>
    <property type="match status" value="1"/>
</dbReference>
<dbReference type="NCBIfam" id="NF001490">
    <property type="entry name" value="PRK00346.1-4"/>
    <property type="match status" value="1"/>
</dbReference>
<dbReference type="NCBIfam" id="TIGR00087">
    <property type="entry name" value="surE"/>
    <property type="match status" value="1"/>
</dbReference>
<dbReference type="PANTHER" id="PTHR30457">
    <property type="entry name" value="5'-NUCLEOTIDASE SURE"/>
    <property type="match status" value="1"/>
</dbReference>
<dbReference type="PANTHER" id="PTHR30457:SF12">
    <property type="entry name" value="5'_3'-NUCLEOTIDASE SURE"/>
    <property type="match status" value="1"/>
</dbReference>
<dbReference type="Pfam" id="PF01975">
    <property type="entry name" value="SurE"/>
    <property type="match status" value="1"/>
</dbReference>
<dbReference type="SUPFAM" id="SSF64167">
    <property type="entry name" value="SurE-like"/>
    <property type="match status" value="1"/>
</dbReference>
<organism>
    <name type="scientific">Proteus mirabilis (strain HI4320)</name>
    <dbReference type="NCBI Taxonomy" id="529507"/>
    <lineage>
        <taxon>Bacteria</taxon>
        <taxon>Pseudomonadati</taxon>
        <taxon>Pseudomonadota</taxon>
        <taxon>Gammaproteobacteria</taxon>
        <taxon>Enterobacterales</taxon>
        <taxon>Morganellaceae</taxon>
        <taxon>Proteus</taxon>
    </lineage>
</organism>
<name>SURE_PROMH</name>
<keyword id="KW-0963">Cytoplasm</keyword>
<keyword id="KW-0378">Hydrolase</keyword>
<keyword id="KW-0479">Metal-binding</keyword>
<keyword id="KW-0547">Nucleotide-binding</keyword>
<keyword id="KW-1185">Reference proteome</keyword>
<evidence type="ECO:0000255" key="1">
    <source>
        <dbReference type="HAMAP-Rule" id="MF_00060"/>
    </source>
</evidence>
<reference key="1">
    <citation type="journal article" date="2008" name="J. Bacteriol.">
        <title>Complete genome sequence of uropathogenic Proteus mirabilis, a master of both adherence and motility.</title>
        <authorList>
            <person name="Pearson M.M."/>
            <person name="Sebaihia M."/>
            <person name="Churcher C."/>
            <person name="Quail M.A."/>
            <person name="Seshasayee A.S."/>
            <person name="Luscombe N.M."/>
            <person name="Abdellah Z."/>
            <person name="Arrosmith C."/>
            <person name="Atkin B."/>
            <person name="Chillingworth T."/>
            <person name="Hauser H."/>
            <person name="Jagels K."/>
            <person name="Moule S."/>
            <person name="Mungall K."/>
            <person name="Norbertczak H."/>
            <person name="Rabbinowitsch E."/>
            <person name="Walker D."/>
            <person name="Whithead S."/>
            <person name="Thomson N.R."/>
            <person name="Rather P.N."/>
            <person name="Parkhill J."/>
            <person name="Mobley H.L.T."/>
        </authorList>
    </citation>
    <scope>NUCLEOTIDE SEQUENCE [LARGE SCALE GENOMIC DNA]</scope>
    <source>
        <strain>HI4320</strain>
    </source>
</reference>
<proteinExistence type="inferred from homology"/>